<protein>
    <recommendedName>
        <fullName evidence="1">Phospho-N-acetylmuramoyl-pentapeptide-transferase</fullName>
        <ecNumber evidence="1">2.7.8.13</ecNumber>
    </recommendedName>
    <alternativeName>
        <fullName evidence="1">UDP-MurNAc-pentapeptide phosphotransferase</fullName>
    </alternativeName>
</protein>
<sequence length="336" mass="36886">MFLTLIAAIISFMVSAFTMPYFIKFYQLKKIGGQQMHEDVKQHLAKAGTPTMGGTVFLLVATAVSLLVSLFSIKNTQSLALISGILSIVVIYGIIGFLDDFLKIFKQINEGLTAKQKLALQLAGGLMFYFLHVSPSGISSINVFGYQLSLGIFYLFFVLFWVVGFSNAVNLTDGIDGLASISVVISLVTYGVIAYVQSQFDVLLLIGAMIGALLGFFCFNHKPAKVFMGDVGSLALGAMLAAISIALRQEWTLLIIGIVYVLETSSVMLQVSYFKYTKKKYGEGRRIFRMTPFHHHLELGGLSGKGKKWSEWQVDAFLWGVGSLASLLVLAILYVF</sequence>
<reference key="1">
    <citation type="journal article" date="2002" name="Proc. Natl. Acad. Sci. U.S.A.">
        <title>Genome sequence of a serotype M3 strain of group A Streptococcus: phage-encoded toxins, the high-virulence phenotype, and clone emergence.</title>
        <authorList>
            <person name="Beres S.B."/>
            <person name="Sylva G.L."/>
            <person name="Barbian K.D."/>
            <person name="Lei B."/>
            <person name="Hoff J.S."/>
            <person name="Mammarella N.D."/>
            <person name="Liu M.-Y."/>
            <person name="Smoot J.C."/>
            <person name="Porcella S.F."/>
            <person name="Parkins L.D."/>
            <person name="Campbell D.S."/>
            <person name="Smith T.M."/>
            <person name="McCormick J.K."/>
            <person name="Leung D.Y.M."/>
            <person name="Schlievert P.M."/>
            <person name="Musser J.M."/>
        </authorList>
    </citation>
    <scope>NUCLEOTIDE SEQUENCE [LARGE SCALE GENOMIC DNA]</scope>
    <source>
        <strain>ATCC BAA-595 / MGAS315</strain>
    </source>
</reference>
<comment type="function">
    <text evidence="1">Catalyzes the initial step of the lipid cycle reactions in the biosynthesis of the cell wall peptidoglycan: transfers peptidoglycan precursor phospho-MurNAc-pentapeptide from UDP-MurNAc-pentapeptide onto the lipid carrier undecaprenyl phosphate, yielding undecaprenyl-pyrophosphoryl-MurNAc-pentapeptide, known as lipid I.</text>
</comment>
<comment type="catalytic activity">
    <reaction evidence="1">
        <text>UDP-N-acetyl-alpha-D-muramoyl-L-alanyl-gamma-D-glutamyl-L-lysyl-D-alanyl-D-alanine + di-trans,octa-cis-undecaprenyl phosphate = Mur2Ac(oyl-L-Ala-gamma-D-Glu-L-Lys-D-Ala-D-Ala)-di-trans,octa-cis-undecaprenyl diphosphate + UMP</text>
        <dbReference type="Rhea" id="RHEA:21920"/>
        <dbReference type="ChEBI" id="CHEBI:57865"/>
        <dbReference type="ChEBI" id="CHEBI:60032"/>
        <dbReference type="ChEBI" id="CHEBI:60392"/>
        <dbReference type="ChEBI" id="CHEBI:70758"/>
        <dbReference type="EC" id="2.7.8.13"/>
    </reaction>
</comment>
<comment type="cofactor">
    <cofactor evidence="1">
        <name>Mg(2+)</name>
        <dbReference type="ChEBI" id="CHEBI:18420"/>
    </cofactor>
</comment>
<comment type="pathway">
    <text evidence="1">Cell wall biogenesis; peptidoglycan biosynthesis.</text>
</comment>
<comment type="subcellular location">
    <subcellularLocation>
        <location evidence="1">Cell membrane</location>
        <topology evidence="1">Multi-pass membrane protein</topology>
    </subcellularLocation>
</comment>
<comment type="similarity">
    <text evidence="1">Belongs to the glycosyltransferase 4 family. MraY subfamily.</text>
</comment>
<organism>
    <name type="scientific">Streptococcus pyogenes serotype M3 (strain ATCC BAA-595 / MGAS315)</name>
    <dbReference type="NCBI Taxonomy" id="198466"/>
    <lineage>
        <taxon>Bacteria</taxon>
        <taxon>Bacillati</taxon>
        <taxon>Bacillota</taxon>
        <taxon>Bacilli</taxon>
        <taxon>Lactobacillales</taxon>
        <taxon>Streptococcaceae</taxon>
        <taxon>Streptococcus</taxon>
    </lineage>
</organism>
<feature type="chain" id="PRO_0000108907" description="Phospho-N-acetylmuramoyl-pentapeptide-transferase">
    <location>
        <begin position="1"/>
        <end position="336"/>
    </location>
</feature>
<feature type="transmembrane region" description="Helical" evidence="1">
    <location>
        <begin position="3"/>
        <end position="23"/>
    </location>
</feature>
<feature type="transmembrane region" description="Helical" evidence="1">
    <location>
        <begin position="53"/>
        <end position="73"/>
    </location>
</feature>
<feature type="transmembrane region" description="Helical" evidence="1">
    <location>
        <begin position="78"/>
        <end position="98"/>
    </location>
</feature>
<feature type="transmembrane region" description="Helical" evidence="1">
    <location>
        <begin position="118"/>
        <end position="138"/>
    </location>
</feature>
<feature type="transmembrane region" description="Helical" evidence="1">
    <location>
        <begin position="143"/>
        <end position="163"/>
    </location>
</feature>
<feature type="transmembrane region" description="Helical" evidence="1">
    <location>
        <begin position="174"/>
        <end position="194"/>
    </location>
</feature>
<feature type="transmembrane region" description="Helical" evidence="1">
    <location>
        <begin position="200"/>
        <end position="220"/>
    </location>
</feature>
<feature type="transmembrane region" description="Helical" evidence="1">
    <location>
        <begin position="226"/>
        <end position="246"/>
    </location>
</feature>
<feature type="transmembrane region" description="Helical" evidence="1">
    <location>
        <begin position="251"/>
        <end position="271"/>
    </location>
</feature>
<feature type="transmembrane region" description="Helical" evidence="1">
    <location>
        <begin position="316"/>
        <end position="336"/>
    </location>
</feature>
<name>MRAY_STRP3</name>
<evidence type="ECO:0000255" key="1">
    <source>
        <dbReference type="HAMAP-Rule" id="MF_00038"/>
    </source>
</evidence>
<proteinExistence type="inferred from homology"/>
<accession>P0DB42</accession>
<accession>Q8K6C7</accession>
<keyword id="KW-0131">Cell cycle</keyword>
<keyword id="KW-0132">Cell division</keyword>
<keyword id="KW-1003">Cell membrane</keyword>
<keyword id="KW-0133">Cell shape</keyword>
<keyword id="KW-0961">Cell wall biogenesis/degradation</keyword>
<keyword id="KW-0460">Magnesium</keyword>
<keyword id="KW-0472">Membrane</keyword>
<keyword id="KW-0479">Metal-binding</keyword>
<keyword id="KW-0573">Peptidoglycan synthesis</keyword>
<keyword id="KW-0808">Transferase</keyword>
<keyword id="KW-0812">Transmembrane</keyword>
<keyword id="KW-1133">Transmembrane helix</keyword>
<dbReference type="EC" id="2.7.8.13" evidence="1"/>
<dbReference type="EMBL" id="AE014074">
    <property type="protein sequence ID" value="AAM80007.1"/>
    <property type="molecule type" value="Genomic_DNA"/>
</dbReference>
<dbReference type="RefSeq" id="WP_011054851.1">
    <property type="nucleotide sequence ID" value="NC_004070.1"/>
</dbReference>
<dbReference type="SMR" id="P0DB42"/>
<dbReference type="KEGG" id="spg:SpyM3_1400"/>
<dbReference type="HOGENOM" id="CLU_023982_0_1_9"/>
<dbReference type="UniPathway" id="UPA00219"/>
<dbReference type="Proteomes" id="UP000000564">
    <property type="component" value="Chromosome"/>
</dbReference>
<dbReference type="GO" id="GO:0005886">
    <property type="term" value="C:plasma membrane"/>
    <property type="evidence" value="ECO:0007669"/>
    <property type="project" value="UniProtKB-SubCell"/>
</dbReference>
<dbReference type="GO" id="GO:0046872">
    <property type="term" value="F:metal ion binding"/>
    <property type="evidence" value="ECO:0007669"/>
    <property type="project" value="UniProtKB-KW"/>
</dbReference>
<dbReference type="GO" id="GO:0008963">
    <property type="term" value="F:phospho-N-acetylmuramoyl-pentapeptide-transferase activity"/>
    <property type="evidence" value="ECO:0007669"/>
    <property type="project" value="UniProtKB-UniRule"/>
</dbReference>
<dbReference type="GO" id="GO:0051301">
    <property type="term" value="P:cell division"/>
    <property type="evidence" value="ECO:0007669"/>
    <property type="project" value="UniProtKB-KW"/>
</dbReference>
<dbReference type="GO" id="GO:0071555">
    <property type="term" value="P:cell wall organization"/>
    <property type="evidence" value="ECO:0007669"/>
    <property type="project" value="UniProtKB-KW"/>
</dbReference>
<dbReference type="GO" id="GO:0009252">
    <property type="term" value="P:peptidoglycan biosynthetic process"/>
    <property type="evidence" value="ECO:0007669"/>
    <property type="project" value="UniProtKB-UniRule"/>
</dbReference>
<dbReference type="GO" id="GO:0008360">
    <property type="term" value="P:regulation of cell shape"/>
    <property type="evidence" value="ECO:0007669"/>
    <property type="project" value="UniProtKB-KW"/>
</dbReference>
<dbReference type="CDD" id="cd06852">
    <property type="entry name" value="GT_MraY"/>
    <property type="match status" value="1"/>
</dbReference>
<dbReference type="HAMAP" id="MF_00038">
    <property type="entry name" value="MraY"/>
    <property type="match status" value="1"/>
</dbReference>
<dbReference type="InterPro" id="IPR000715">
    <property type="entry name" value="Glycosyl_transferase_4"/>
</dbReference>
<dbReference type="InterPro" id="IPR003524">
    <property type="entry name" value="PNAcMuramoyl-5peptid_Trfase"/>
</dbReference>
<dbReference type="InterPro" id="IPR018480">
    <property type="entry name" value="PNAcMuramoyl-5peptid_Trfase_CS"/>
</dbReference>
<dbReference type="NCBIfam" id="TIGR00445">
    <property type="entry name" value="mraY"/>
    <property type="match status" value="1"/>
</dbReference>
<dbReference type="PANTHER" id="PTHR22926">
    <property type="entry name" value="PHOSPHO-N-ACETYLMURAMOYL-PENTAPEPTIDE-TRANSFERASE"/>
    <property type="match status" value="1"/>
</dbReference>
<dbReference type="PANTHER" id="PTHR22926:SF5">
    <property type="entry name" value="PHOSPHO-N-ACETYLMURAMOYL-PENTAPEPTIDE-TRANSFERASE HOMOLOG"/>
    <property type="match status" value="1"/>
</dbReference>
<dbReference type="Pfam" id="PF00953">
    <property type="entry name" value="Glycos_transf_4"/>
    <property type="match status" value="1"/>
</dbReference>
<dbReference type="Pfam" id="PF10555">
    <property type="entry name" value="MraY_sig1"/>
    <property type="match status" value="1"/>
</dbReference>
<dbReference type="PROSITE" id="PS01348">
    <property type="entry name" value="MRAY_2"/>
    <property type="match status" value="1"/>
</dbReference>
<gene>
    <name evidence="1" type="primary">mraY</name>
    <name type="ordered locus">SpyM3_1400</name>
</gene>